<reference key="1">
    <citation type="submission" date="2007-03" db="EMBL/GenBank/DDBJ databases">
        <title>Sequencing analysis of Crucihimalaya wallichii chloroplast DNA.</title>
        <authorList>
            <person name="Hosouchi T."/>
            <person name="Tsuruoka H."/>
            <person name="Kotani H."/>
        </authorList>
    </citation>
    <scope>NUCLEOTIDE SEQUENCE [LARGE SCALE GENOMIC DNA]</scope>
</reference>
<evidence type="ECO:0000305" key="1"/>
<gene>
    <name type="primary">ycf15-A</name>
</gene>
<gene>
    <name type="primary">ycf15-B</name>
</gene>
<feature type="chain" id="PRO_0000360380" description="Putative uncharacterized protein ycf15">
    <location>
        <begin position="1"/>
        <end position="77"/>
    </location>
</feature>
<name>YCF15_CRUWA</name>
<geneLocation type="chloroplast"/>
<accession>A4QKX5</accession>
<proteinExistence type="uncertain"/>
<keyword id="KW-0150">Chloroplast</keyword>
<keyword id="KW-0934">Plastid</keyword>
<sequence length="77" mass="9078">MLLLKHGRIEILDQNTMYGWYELPKQEFLNSEQPELLLTTSKKFPLMKDGNPLENQKYVCRMKLLLLSVPITNQLNN</sequence>
<comment type="subcellular location">
    <subcellularLocation>
        <location>Plastid</location>
        <location>Chloroplast</location>
    </subcellularLocation>
</comment>
<comment type="similarity">
    <text evidence="1">Belongs to the ycf15 family.</text>
</comment>
<comment type="caution">
    <text evidence="1">Could be the product of a pseudogene.</text>
</comment>
<organism>
    <name type="scientific">Crucihimalaya wallichii</name>
    <name type="common">Rock-cress</name>
    <name type="synonym">Arabidopsis campestris</name>
    <dbReference type="NCBI Taxonomy" id="78192"/>
    <lineage>
        <taxon>Eukaryota</taxon>
        <taxon>Viridiplantae</taxon>
        <taxon>Streptophyta</taxon>
        <taxon>Embryophyta</taxon>
        <taxon>Tracheophyta</taxon>
        <taxon>Spermatophyta</taxon>
        <taxon>Magnoliopsida</taxon>
        <taxon>eudicotyledons</taxon>
        <taxon>Gunneridae</taxon>
        <taxon>Pentapetalae</taxon>
        <taxon>rosids</taxon>
        <taxon>malvids</taxon>
        <taxon>Brassicales</taxon>
        <taxon>Brassicaceae</taxon>
        <taxon>Crucihimalayeae</taxon>
        <taxon>Crucihimalaya</taxon>
    </lineage>
</organism>
<protein>
    <recommendedName>
        <fullName>Putative uncharacterized protein ycf15</fullName>
    </recommendedName>
    <alternativeName>
        <fullName>Orf77</fullName>
    </alternativeName>
</protein>
<dbReference type="EMBL" id="AP009372">
    <property type="protein sequence ID" value="BAF50330.1"/>
    <property type="molecule type" value="Genomic_DNA"/>
</dbReference>
<dbReference type="EMBL" id="AP009372">
    <property type="protein sequence ID" value="BAF50351.1"/>
    <property type="molecule type" value="Genomic_DNA"/>
</dbReference>
<dbReference type="GO" id="GO:0009507">
    <property type="term" value="C:chloroplast"/>
    <property type="evidence" value="ECO:0007669"/>
    <property type="project" value="UniProtKB-SubCell"/>
</dbReference>
<dbReference type="InterPro" id="IPR019645">
    <property type="entry name" value="Uncharacterised_Ycf15"/>
</dbReference>
<dbReference type="Pfam" id="PF10705">
    <property type="entry name" value="Ycf15"/>
    <property type="match status" value="1"/>
</dbReference>